<sequence>EQFEDYGHMRF</sequence>
<reference evidence="5" key="1">
    <citation type="journal article" date="2009" name="BMC Evol. Biol.">
        <title>A proteomic approach for studying insect phylogeny: CAPA peptides of ancient insect taxa (Dictyoptera, Blattoptera) as a test case.</title>
        <authorList>
            <person name="Roth S."/>
            <person name="Fromm B."/>
            <person name="Gaede G."/>
            <person name="Predel R."/>
        </authorList>
    </citation>
    <scope>PROTEIN SEQUENCE</scope>
    <scope>AMIDATION AT PHE-11</scope>
    <source>
        <tissue evidence="3">Corpora cardiaca</tissue>
    </source>
</reference>
<protein>
    <recommendedName>
        <fullName evidence="4">Sulfakinin-1</fullName>
        <shortName evidence="4">GynCa-SK-1</shortName>
    </recommendedName>
</protein>
<evidence type="ECO:0000250" key="1">
    <source>
        <dbReference type="UniProtKB" id="P41493"/>
    </source>
</evidence>
<evidence type="ECO:0000255" key="2"/>
<evidence type="ECO:0000269" key="3">
    <source>
    </source>
</evidence>
<evidence type="ECO:0000303" key="4">
    <source>
    </source>
</evidence>
<evidence type="ECO:0000305" key="5"/>
<name>SK1_GYNCS</name>
<dbReference type="GO" id="GO:0005576">
    <property type="term" value="C:extracellular region"/>
    <property type="evidence" value="ECO:0007669"/>
    <property type="project" value="UniProtKB-SubCell"/>
</dbReference>
<dbReference type="GO" id="GO:0005179">
    <property type="term" value="F:hormone activity"/>
    <property type="evidence" value="ECO:0007669"/>
    <property type="project" value="UniProtKB-KW"/>
</dbReference>
<dbReference type="GO" id="GO:0007218">
    <property type="term" value="P:neuropeptide signaling pathway"/>
    <property type="evidence" value="ECO:0007669"/>
    <property type="project" value="UniProtKB-KW"/>
</dbReference>
<dbReference type="InterPro" id="IPR013152">
    <property type="entry name" value="Gastrin/cholecystokinin_CS"/>
</dbReference>
<dbReference type="InterPro" id="IPR013259">
    <property type="entry name" value="Sulfakinin"/>
</dbReference>
<dbReference type="Pfam" id="PF08257">
    <property type="entry name" value="Sulfakinin"/>
    <property type="match status" value="1"/>
</dbReference>
<dbReference type="PROSITE" id="PS00259">
    <property type="entry name" value="GASTRIN"/>
    <property type="match status" value="1"/>
</dbReference>
<keyword id="KW-0027">Amidation</keyword>
<keyword id="KW-0903">Direct protein sequencing</keyword>
<keyword id="KW-0372">Hormone</keyword>
<keyword id="KW-0527">Neuropeptide</keyword>
<keyword id="KW-0964">Secreted</keyword>
<keyword id="KW-0765">Sulfation</keyword>
<comment type="function">
    <text evidence="1">Myotropic peptide.</text>
</comment>
<comment type="subcellular location">
    <subcellularLocation>
        <location evidence="5">Secreted</location>
    </subcellularLocation>
</comment>
<comment type="similarity">
    <text evidence="2">Belongs to the gastrin/cholecystokinin family.</text>
</comment>
<accession>P85850</accession>
<feature type="peptide" id="PRO_0000378880" description="Sulfakinin-1" evidence="3">
    <location>
        <begin position="1"/>
        <end position="11"/>
    </location>
</feature>
<feature type="modified residue" description="Sulfotyrosine" evidence="1">
    <location>
        <position position="6"/>
    </location>
</feature>
<feature type="modified residue" description="Phenylalanine amide" evidence="3">
    <location>
        <position position="11"/>
    </location>
</feature>
<organism>
    <name type="scientific">Gyna cf. cafforum (strain SR-2005)</name>
    <name type="common">Cockroach</name>
    <dbReference type="NCBI Taxonomy" id="348763"/>
    <lineage>
        <taxon>Eukaryota</taxon>
        <taxon>Metazoa</taxon>
        <taxon>Ecdysozoa</taxon>
        <taxon>Arthropoda</taxon>
        <taxon>Hexapoda</taxon>
        <taxon>Insecta</taxon>
        <taxon>Pterygota</taxon>
        <taxon>Neoptera</taxon>
        <taxon>Polyneoptera</taxon>
        <taxon>Dictyoptera</taxon>
        <taxon>Blattodea</taxon>
        <taxon>Blaberoidea</taxon>
        <taxon>Blaberidae</taxon>
        <taxon>Gyninae</taxon>
        <taxon>Gyna</taxon>
    </lineage>
</organism>
<proteinExistence type="evidence at protein level"/>